<evidence type="ECO:0000255" key="1">
    <source>
        <dbReference type="PROSITE-ProRule" id="PRU00686"/>
    </source>
</evidence>
<evidence type="ECO:0000256" key="2">
    <source>
        <dbReference type="SAM" id="MobiDB-lite"/>
    </source>
</evidence>
<evidence type="ECO:0000305" key="3"/>
<name>GRCR2_DROME</name>
<dbReference type="EMBL" id="AE014298">
    <property type="protein sequence ID" value="AAF45872.2"/>
    <property type="molecule type" value="Genomic_DNA"/>
</dbReference>
<dbReference type="EMBL" id="AE014298">
    <property type="protein sequence ID" value="AAN09094.1"/>
    <property type="molecule type" value="Genomic_DNA"/>
</dbReference>
<dbReference type="EMBL" id="AE014298">
    <property type="protein sequence ID" value="AAN09095.1"/>
    <property type="molecule type" value="Genomic_DNA"/>
</dbReference>
<dbReference type="EMBL" id="BT009989">
    <property type="protein sequence ID" value="AAQ22458.1"/>
    <property type="molecule type" value="mRNA"/>
</dbReference>
<dbReference type="RefSeq" id="NP_570060.1">
    <property type="nucleotide sequence ID" value="NM_130704.2"/>
</dbReference>
<dbReference type="RefSeq" id="NP_726865.1">
    <property type="nucleotide sequence ID" value="NM_166973.2"/>
</dbReference>
<dbReference type="RefSeq" id="NP_726866.1">
    <property type="nucleotide sequence ID" value="NM_166974.1"/>
</dbReference>
<dbReference type="SMR" id="Q9W4S1"/>
<dbReference type="BioGRID" id="57841">
    <property type="interactions" value="10"/>
</dbReference>
<dbReference type="IntAct" id="Q9W4S1">
    <property type="interactions" value="9"/>
</dbReference>
<dbReference type="STRING" id="7227.FBpp0070504"/>
<dbReference type="PaxDb" id="7227-FBpp0070503"/>
<dbReference type="DNASU" id="31316"/>
<dbReference type="EnsemblMetazoa" id="FBtr0070527">
    <property type="protein sequence ID" value="FBpp0070503"/>
    <property type="gene ID" value="FBgn0029662"/>
</dbReference>
<dbReference type="EnsemblMetazoa" id="FBtr0070528">
    <property type="protein sequence ID" value="FBpp0070504"/>
    <property type="gene ID" value="FBgn0029662"/>
</dbReference>
<dbReference type="EnsemblMetazoa" id="FBtr0070529">
    <property type="protein sequence ID" value="FBpp0070505"/>
    <property type="gene ID" value="FBgn0029662"/>
</dbReference>
<dbReference type="GeneID" id="31316"/>
<dbReference type="KEGG" id="dme:Dmel_CG12206"/>
<dbReference type="UCSC" id="CG12206-RA">
    <property type="organism name" value="d. melanogaster"/>
</dbReference>
<dbReference type="AGR" id="FB:FBgn0029662"/>
<dbReference type="FlyBase" id="FBgn0029662">
    <property type="gene designation" value="CG12206"/>
</dbReference>
<dbReference type="VEuPathDB" id="VectorBase:FBgn0029662"/>
<dbReference type="eggNOG" id="KOG2824">
    <property type="taxonomic scope" value="Eukaryota"/>
</dbReference>
<dbReference type="GeneTree" id="ENSGT00940000171068"/>
<dbReference type="HOGENOM" id="CLU_468745_0_0_1"/>
<dbReference type="InParanoid" id="Q9W4S1"/>
<dbReference type="OMA" id="EADQYYN"/>
<dbReference type="OrthoDB" id="423313at2759"/>
<dbReference type="PhylomeDB" id="Q9W4S1"/>
<dbReference type="BioGRID-ORCS" id="31316">
    <property type="hits" value="0 hits in 3 CRISPR screens"/>
</dbReference>
<dbReference type="GenomeRNAi" id="31316"/>
<dbReference type="PRO" id="PR:Q9W4S1"/>
<dbReference type="Proteomes" id="UP000000803">
    <property type="component" value="Chromosome X"/>
</dbReference>
<dbReference type="Bgee" id="FBgn0029662">
    <property type="expression patterns" value="Expressed in nurse follicle cell (Drosophila) in ovary and 41 other cell types or tissues"/>
</dbReference>
<dbReference type="GO" id="GO:0007605">
    <property type="term" value="P:sensory perception of sound"/>
    <property type="evidence" value="ECO:0007669"/>
    <property type="project" value="InterPro"/>
</dbReference>
<dbReference type="CDD" id="cd03031">
    <property type="entry name" value="GRX_GRX_like"/>
    <property type="match status" value="1"/>
</dbReference>
<dbReference type="Gene3D" id="3.40.30.10">
    <property type="entry name" value="Glutaredoxin"/>
    <property type="match status" value="1"/>
</dbReference>
<dbReference type="InterPro" id="IPR002109">
    <property type="entry name" value="Glutaredoxin"/>
</dbReference>
<dbReference type="InterPro" id="IPR042797">
    <property type="entry name" value="GRXCR1"/>
</dbReference>
<dbReference type="InterPro" id="IPR036249">
    <property type="entry name" value="Thioredoxin-like_sf"/>
</dbReference>
<dbReference type="PANTHER" id="PTHR46990">
    <property type="entry name" value="GLUTAREDOXIN DOMAIN-CONTAINING CYSTEINE-RICH PROTEIN 1"/>
    <property type="match status" value="1"/>
</dbReference>
<dbReference type="PANTHER" id="PTHR46990:SF1">
    <property type="entry name" value="GLUTAREDOXIN DOMAIN-CONTAINING CYSTEINE-RICH PROTEIN 1"/>
    <property type="match status" value="1"/>
</dbReference>
<dbReference type="Pfam" id="PF00462">
    <property type="entry name" value="Glutaredoxin"/>
    <property type="match status" value="1"/>
</dbReference>
<dbReference type="Pfam" id="PF23733">
    <property type="entry name" value="GRXCR1-2_C"/>
    <property type="match status" value="1"/>
</dbReference>
<dbReference type="SUPFAM" id="SSF52833">
    <property type="entry name" value="Thioredoxin-like"/>
    <property type="match status" value="1"/>
</dbReference>
<dbReference type="PROSITE" id="PS51354">
    <property type="entry name" value="GLUTAREDOXIN_2"/>
    <property type="match status" value="1"/>
</dbReference>
<protein>
    <recommendedName>
        <fullName>Glutaredoxin domain-containing cysteine-rich protein CG12206</fullName>
    </recommendedName>
</protein>
<accession>Q9W4S1</accession>
<proteinExistence type="evidence at transcript level"/>
<comment type="similarity">
    <text evidence="3">Belongs to the GRXCR1 family.</text>
</comment>
<feature type="chain" id="PRO_0000349194" description="Glutaredoxin domain-containing cysteine-rich protein CG12206">
    <location>
        <begin position="1"/>
        <end position="582"/>
    </location>
</feature>
<feature type="domain" description="Glutaredoxin" evidence="1">
    <location>
        <begin position="423"/>
        <end position="528"/>
    </location>
</feature>
<feature type="region of interest" description="Disordered" evidence="2">
    <location>
        <begin position="217"/>
        <end position="244"/>
    </location>
</feature>
<feature type="region of interest" description="Disordered" evidence="2">
    <location>
        <begin position="260"/>
        <end position="300"/>
    </location>
</feature>
<feature type="compositionally biased region" description="Polar residues" evidence="2">
    <location>
        <begin position="217"/>
        <end position="227"/>
    </location>
</feature>
<feature type="compositionally biased region" description="Low complexity" evidence="2">
    <location>
        <begin position="291"/>
        <end position="300"/>
    </location>
</feature>
<keyword id="KW-1185">Reference proteome</keyword>
<organism>
    <name type="scientific">Drosophila melanogaster</name>
    <name type="common">Fruit fly</name>
    <dbReference type="NCBI Taxonomy" id="7227"/>
    <lineage>
        <taxon>Eukaryota</taxon>
        <taxon>Metazoa</taxon>
        <taxon>Ecdysozoa</taxon>
        <taxon>Arthropoda</taxon>
        <taxon>Hexapoda</taxon>
        <taxon>Insecta</taxon>
        <taxon>Pterygota</taxon>
        <taxon>Neoptera</taxon>
        <taxon>Endopterygota</taxon>
        <taxon>Diptera</taxon>
        <taxon>Brachycera</taxon>
        <taxon>Muscomorpha</taxon>
        <taxon>Ephydroidea</taxon>
        <taxon>Drosophilidae</taxon>
        <taxon>Drosophila</taxon>
        <taxon>Sophophora</taxon>
    </lineage>
</organism>
<sequence length="582" mass="63369">MAAITSNVSRLEPMRGISIIIESPEVATATPPPATTTATAEAEAATKQVAPTAKSNSNTEMSLKSQAAGMLLAFGDTAATAKDNLETSYDTAAKSTAAPETNKIYPQLLLRIGGEIAGATASAEAAASAATAAAATATSPTIISCNGEIAASQAAATAADTAATLQHNNTVKIQIESQGQQRTLGKQISVVKLNEGVEEMQQHMCYLVDTSGQYSPCETLDSGTGSDLENHPQQQQQPQQVRSPQLELHLQTTRLMVNEEADHKHSPLETPSPVPKRAYSLTDDSEECDESSNSSLSCDSLHSGGLLPTTLLRDIRFRERASGPLVTKINGRPLQFETDGYYTFHVREHENFRSFGSNSSTEYEAQHFTDEQPGEDFVGFRDIRTAGKLAGNSTIKSAKGTVRGVKNRVRNGVATFLQLQQPNVKNYMEKDVGKVVLYTTSMGIIRDTYAKCANVKKILRTLLIKFEERDIFMSVEYQQEMRERMQDETIRVPQLFVEGQLIGDANIVERLNESGELRQLLRPYKSIATAYTCQTCGGYRMLPCPACNGSKKSMHRNHFTAEFVALKCMNCDEVGLIKCPNC</sequence>
<gene>
    <name type="ORF">CG12206</name>
</gene>
<reference key="1">
    <citation type="journal article" date="2000" name="Science">
        <title>The genome sequence of Drosophila melanogaster.</title>
        <authorList>
            <person name="Adams M.D."/>
            <person name="Celniker S.E."/>
            <person name="Holt R.A."/>
            <person name="Evans C.A."/>
            <person name="Gocayne J.D."/>
            <person name="Amanatides P.G."/>
            <person name="Scherer S.E."/>
            <person name="Li P.W."/>
            <person name="Hoskins R.A."/>
            <person name="Galle R.F."/>
            <person name="George R.A."/>
            <person name="Lewis S.E."/>
            <person name="Richards S."/>
            <person name="Ashburner M."/>
            <person name="Henderson S.N."/>
            <person name="Sutton G.G."/>
            <person name="Wortman J.R."/>
            <person name="Yandell M.D."/>
            <person name="Zhang Q."/>
            <person name="Chen L.X."/>
            <person name="Brandon R.C."/>
            <person name="Rogers Y.-H.C."/>
            <person name="Blazej R.G."/>
            <person name="Champe M."/>
            <person name="Pfeiffer B.D."/>
            <person name="Wan K.H."/>
            <person name="Doyle C."/>
            <person name="Baxter E.G."/>
            <person name="Helt G."/>
            <person name="Nelson C.R."/>
            <person name="Miklos G.L.G."/>
            <person name="Abril J.F."/>
            <person name="Agbayani A."/>
            <person name="An H.-J."/>
            <person name="Andrews-Pfannkoch C."/>
            <person name="Baldwin D."/>
            <person name="Ballew R.M."/>
            <person name="Basu A."/>
            <person name="Baxendale J."/>
            <person name="Bayraktaroglu L."/>
            <person name="Beasley E.M."/>
            <person name="Beeson K.Y."/>
            <person name="Benos P.V."/>
            <person name="Berman B.P."/>
            <person name="Bhandari D."/>
            <person name="Bolshakov S."/>
            <person name="Borkova D."/>
            <person name="Botchan M.R."/>
            <person name="Bouck J."/>
            <person name="Brokstein P."/>
            <person name="Brottier P."/>
            <person name="Burtis K.C."/>
            <person name="Busam D.A."/>
            <person name="Butler H."/>
            <person name="Cadieu E."/>
            <person name="Center A."/>
            <person name="Chandra I."/>
            <person name="Cherry J.M."/>
            <person name="Cawley S."/>
            <person name="Dahlke C."/>
            <person name="Davenport L.B."/>
            <person name="Davies P."/>
            <person name="de Pablos B."/>
            <person name="Delcher A."/>
            <person name="Deng Z."/>
            <person name="Mays A.D."/>
            <person name="Dew I."/>
            <person name="Dietz S.M."/>
            <person name="Dodson K."/>
            <person name="Doup L.E."/>
            <person name="Downes M."/>
            <person name="Dugan-Rocha S."/>
            <person name="Dunkov B.C."/>
            <person name="Dunn P."/>
            <person name="Durbin K.J."/>
            <person name="Evangelista C.C."/>
            <person name="Ferraz C."/>
            <person name="Ferriera S."/>
            <person name="Fleischmann W."/>
            <person name="Fosler C."/>
            <person name="Gabrielian A.E."/>
            <person name="Garg N.S."/>
            <person name="Gelbart W.M."/>
            <person name="Glasser K."/>
            <person name="Glodek A."/>
            <person name="Gong F."/>
            <person name="Gorrell J.H."/>
            <person name="Gu Z."/>
            <person name="Guan P."/>
            <person name="Harris M."/>
            <person name="Harris N.L."/>
            <person name="Harvey D.A."/>
            <person name="Heiman T.J."/>
            <person name="Hernandez J.R."/>
            <person name="Houck J."/>
            <person name="Hostin D."/>
            <person name="Houston K.A."/>
            <person name="Howland T.J."/>
            <person name="Wei M.-H."/>
            <person name="Ibegwam C."/>
            <person name="Jalali M."/>
            <person name="Kalush F."/>
            <person name="Karpen G.H."/>
            <person name="Ke Z."/>
            <person name="Kennison J.A."/>
            <person name="Ketchum K.A."/>
            <person name="Kimmel B.E."/>
            <person name="Kodira C.D."/>
            <person name="Kraft C.L."/>
            <person name="Kravitz S."/>
            <person name="Kulp D."/>
            <person name="Lai Z."/>
            <person name="Lasko P."/>
            <person name="Lei Y."/>
            <person name="Levitsky A.A."/>
            <person name="Li J.H."/>
            <person name="Li Z."/>
            <person name="Liang Y."/>
            <person name="Lin X."/>
            <person name="Liu X."/>
            <person name="Mattei B."/>
            <person name="McIntosh T.C."/>
            <person name="McLeod M.P."/>
            <person name="McPherson D."/>
            <person name="Merkulov G."/>
            <person name="Milshina N.V."/>
            <person name="Mobarry C."/>
            <person name="Morris J."/>
            <person name="Moshrefi A."/>
            <person name="Mount S.M."/>
            <person name="Moy M."/>
            <person name="Murphy B."/>
            <person name="Murphy L."/>
            <person name="Muzny D.M."/>
            <person name="Nelson D.L."/>
            <person name="Nelson D.R."/>
            <person name="Nelson K.A."/>
            <person name="Nixon K."/>
            <person name="Nusskern D.R."/>
            <person name="Pacleb J.M."/>
            <person name="Palazzolo M."/>
            <person name="Pittman G.S."/>
            <person name="Pan S."/>
            <person name="Pollard J."/>
            <person name="Puri V."/>
            <person name="Reese M.G."/>
            <person name="Reinert K."/>
            <person name="Remington K."/>
            <person name="Saunders R.D.C."/>
            <person name="Scheeler F."/>
            <person name="Shen H."/>
            <person name="Shue B.C."/>
            <person name="Siden-Kiamos I."/>
            <person name="Simpson M."/>
            <person name="Skupski M.P."/>
            <person name="Smith T.J."/>
            <person name="Spier E."/>
            <person name="Spradling A.C."/>
            <person name="Stapleton M."/>
            <person name="Strong R."/>
            <person name="Sun E."/>
            <person name="Svirskas R."/>
            <person name="Tector C."/>
            <person name="Turner R."/>
            <person name="Venter E."/>
            <person name="Wang A.H."/>
            <person name="Wang X."/>
            <person name="Wang Z.-Y."/>
            <person name="Wassarman D.A."/>
            <person name="Weinstock G.M."/>
            <person name="Weissenbach J."/>
            <person name="Williams S.M."/>
            <person name="Woodage T."/>
            <person name="Worley K.C."/>
            <person name="Wu D."/>
            <person name="Yang S."/>
            <person name="Yao Q.A."/>
            <person name="Ye J."/>
            <person name="Yeh R.-F."/>
            <person name="Zaveri J.S."/>
            <person name="Zhan M."/>
            <person name="Zhang G."/>
            <person name="Zhao Q."/>
            <person name="Zheng L."/>
            <person name="Zheng X.H."/>
            <person name="Zhong F.N."/>
            <person name="Zhong W."/>
            <person name="Zhou X."/>
            <person name="Zhu S.C."/>
            <person name="Zhu X."/>
            <person name="Smith H.O."/>
            <person name="Gibbs R.A."/>
            <person name="Myers E.W."/>
            <person name="Rubin G.M."/>
            <person name="Venter J.C."/>
        </authorList>
    </citation>
    <scope>NUCLEOTIDE SEQUENCE [LARGE SCALE GENOMIC DNA]</scope>
    <source>
        <strain>Berkeley</strain>
    </source>
</reference>
<reference key="2">
    <citation type="journal article" date="2002" name="Genome Biol.">
        <title>Annotation of the Drosophila melanogaster euchromatic genome: a systematic review.</title>
        <authorList>
            <person name="Misra S."/>
            <person name="Crosby M.A."/>
            <person name="Mungall C.J."/>
            <person name="Matthews B.B."/>
            <person name="Campbell K.S."/>
            <person name="Hradecky P."/>
            <person name="Huang Y."/>
            <person name="Kaminker J.S."/>
            <person name="Millburn G.H."/>
            <person name="Prochnik S.E."/>
            <person name="Smith C.D."/>
            <person name="Tupy J.L."/>
            <person name="Whitfield E.J."/>
            <person name="Bayraktaroglu L."/>
            <person name="Berman B.P."/>
            <person name="Bettencourt B.R."/>
            <person name="Celniker S.E."/>
            <person name="de Grey A.D.N.J."/>
            <person name="Drysdale R.A."/>
            <person name="Harris N.L."/>
            <person name="Richter J."/>
            <person name="Russo S."/>
            <person name="Schroeder A.J."/>
            <person name="Shu S.Q."/>
            <person name="Stapleton M."/>
            <person name="Yamada C."/>
            <person name="Ashburner M."/>
            <person name="Gelbart W.M."/>
            <person name="Rubin G.M."/>
            <person name="Lewis S.E."/>
        </authorList>
    </citation>
    <scope>GENOME REANNOTATION</scope>
    <source>
        <strain>Berkeley</strain>
    </source>
</reference>
<reference key="3">
    <citation type="submission" date="2003-08" db="EMBL/GenBank/DDBJ databases">
        <authorList>
            <person name="Stapleton M."/>
            <person name="Brokstein P."/>
            <person name="Hong L."/>
            <person name="Agbayani A."/>
            <person name="Carlson J.W."/>
            <person name="Champe M."/>
            <person name="Chavez C."/>
            <person name="Dorsett V."/>
            <person name="Dresnek D."/>
            <person name="Farfan D."/>
            <person name="Frise E."/>
            <person name="George R.A."/>
            <person name="Gonzalez M."/>
            <person name="Guarin H."/>
            <person name="Kronmiller B."/>
            <person name="Li P.W."/>
            <person name="Liao G."/>
            <person name="Miranda A."/>
            <person name="Mungall C.J."/>
            <person name="Nunoo J."/>
            <person name="Pacleb J.M."/>
            <person name="Paragas V."/>
            <person name="Park S."/>
            <person name="Patel S."/>
            <person name="Phouanenavong S."/>
            <person name="Wan K.H."/>
            <person name="Yu C."/>
            <person name="Lewis S.E."/>
            <person name="Rubin G.M."/>
            <person name="Celniker S.E."/>
        </authorList>
    </citation>
    <scope>NUCLEOTIDE SEQUENCE [LARGE SCALE MRNA]</scope>
    <source>
        <strain>Berkeley</strain>
        <tissue>Embryo</tissue>
    </source>
</reference>